<reference key="1">
    <citation type="journal article" date="2000" name="Proc. Natl. Acad. Sci. U.S.A.">
        <title>Remarkable species diversity in Malagasy mouse lemurs (primates, Microcebus).</title>
        <authorList>
            <person name="Yoder A.D."/>
            <person name="Rasoloarison R.M."/>
            <person name="Goodman S.M."/>
            <person name="Irwin J.A."/>
            <person name="Atsalis S."/>
            <person name="Ravosa M.J."/>
            <person name="Ganzhorn J.U."/>
        </authorList>
    </citation>
    <scope>NUCLEOTIDE SEQUENCE [GENOMIC DNA]</scope>
</reference>
<name>CYB_MICSM</name>
<proteinExistence type="inferred from homology"/>
<gene>
    <name type="primary">MT-CYB</name>
    <name type="synonym">COB</name>
    <name type="synonym">CYTB</name>
    <name type="synonym">MTCYB</name>
</gene>
<comment type="function">
    <text evidence="2">Component of the ubiquinol-cytochrome c reductase complex (complex III or cytochrome b-c1 complex) that is part of the mitochondrial respiratory chain. The b-c1 complex mediates electron transfer from ubiquinol to cytochrome c. Contributes to the generation of a proton gradient across the mitochondrial membrane that is then used for ATP synthesis.</text>
</comment>
<comment type="cofactor">
    <cofactor evidence="2">
        <name>heme b</name>
        <dbReference type="ChEBI" id="CHEBI:60344"/>
    </cofactor>
    <text evidence="2">Binds 2 heme b groups non-covalently.</text>
</comment>
<comment type="subunit">
    <text evidence="2">The cytochrome bc1 complex contains 11 subunits: 3 respiratory subunits (MT-CYB, CYC1 and UQCRFS1), 2 core proteins (UQCRC1 and UQCRC2) and 6 low-molecular weight proteins (UQCRH/QCR6, UQCRB/QCR7, UQCRQ/QCR8, UQCR10/QCR9, UQCR11/QCR10 and a cleavage product of UQCRFS1). This cytochrome bc1 complex then forms a dimer.</text>
</comment>
<comment type="subcellular location">
    <subcellularLocation>
        <location evidence="2">Mitochondrion inner membrane</location>
        <topology evidence="2">Multi-pass membrane protein</topology>
    </subcellularLocation>
</comment>
<comment type="miscellaneous">
    <text evidence="1">Heme 1 (or BL or b562) is low-potential and absorbs at about 562 nm, and heme 2 (or BH or b566) is high-potential and absorbs at about 566 nm.</text>
</comment>
<comment type="similarity">
    <text evidence="3 4">Belongs to the cytochrome b family.</text>
</comment>
<comment type="caution">
    <text evidence="2">The full-length protein contains only eight transmembrane helices, not nine as predicted by bioinformatics tools.</text>
</comment>
<feature type="chain" id="PRO_0000254823" description="Cytochrome b">
    <location>
        <begin position="1"/>
        <end position="379"/>
    </location>
</feature>
<feature type="transmembrane region" description="Helical" evidence="2">
    <location>
        <begin position="33"/>
        <end position="53"/>
    </location>
</feature>
<feature type="transmembrane region" description="Helical" evidence="2">
    <location>
        <begin position="77"/>
        <end position="98"/>
    </location>
</feature>
<feature type="transmembrane region" description="Helical" evidence="2">
    <location>
        <begin position="113"/>
        <end position="133"/>
    </location>
</feature>
<feature type="transmembrane region" description="Helical" evidence="2">
    <location>
        <begin position="178"/>
        <end position="198"/>
    </location>
</feature>
<feature type="transmembrane region" description="Helical" evidence="2">
    <location>
        <begin position="226"/>
        <end position="246"/>
    </location>
</feature>
<feature type="transmembrane region" description="Helical" evidence="2">
    <location>
        <begin position="288"/>
        <end position="308"/>
    </location>
</feature>
<feature type="transmembrane region" description="Helical" evidence="2">
    <location>
        <begin position="320"/>
        <end position="340"/>
    </location>
</feature>
<feature type="transmembrane region" description="Helical" evidence="2">
    <location>
        <begin position="347"/>
        <end position="367"/>
    </location>
</feature>
<feature type="binding site" description="axial binding residue" evidence="2">
    <location>
        <position position="83"/>
    </location>
    <ligand>
        <name>heme b</name>
        <dbReference type="ChEBI" id="CHEBI:60344"/>
        <label>b562</label>
    </ligand>
    <ligandPart>
        <name>Fe</name>
        <dbReference type="ChEBI" id="CHEBI:18248"/>
    </ligandPart>
</feature>
<feature type="binding site" description="axial binding residue" evidence="2">
    <location>
        <position position="97"/>
    </location>
    <ligand>
        <name>heme b</name>
        <dbReference type="ChEBI" id="CHEBI:60344"/>
        <label>b566</label>
    </ligand>
    <ligandPart>
        <name>Fe</name>
        <dbReference type="ChEBI" id="CHEBI:18248"/>
    </ligandPart>
</feature>
<feature type="binding site" description="axial binding residue" evidence="2">
    <location>
        <position position="182"/>
    </location>
    <ligand>
        <name>heme b</name>
        <dbReference type="ChEBI" id="CHEBI:60344"/>
        <label>b562</label>
    </ligand>
    <ligandPart>
        <name>Fe</name>
        <dbReference type="ChEBI" id="CHEBI:18248"/>
    </ligandPart>
</feature>
<feature type="binding site" description="axial binding residue" evidence="2">
    <location>
        <position position="196"/>
    </location>
    <ligand>
        <name>heme b</name>
        <dbReference type="ChEBI" id="CHEBI:60344"/>
        <label>b566</label>
    </ligand>
    <ligandPart>
        <name>Fe</name>
        <dbReference type="ChEBI" id="CHEBI:18248"/>
    </ligandPart>
</feature>
<feature type="binding site" evidence="2">
    <location>
        <position position="201"/>
    </location>
    <ligand>
        <name>a ubiquinone</name>
        <dbReference type="ChEBI" id="CHEBI:16389"/>
    </ligand>
</feature>
<organism>
    <name type="scientific">Microcebus sambiranensis</name>
    <name type="common">Sambirano mouse lemur</name>
    <dbReference type="NCBI Taxonomy" id="143353"/>
    <lineage>
        <taxon>Eukaryota</taxon>
        <taxon>Metazoa</taxon>
        <taxon>Chordata</taxon>
        <taxon>Craniata</taxon>
        <taxon>Vertebrata</taxon>
        <taxon>Euteleostomi</taxon>
        <taxon>Mammalia</taxon>
        <taxon>Eutheria</taxon>
        <taxon>Euarchontoglires</taxon>
        <taxon>Primates</taxon>
        <taxon>Strepsirrhini</taxon>
        <taxon>Lemuriformes</taxon>
        <taxon>Cheirogaleidae</taxon>
        <taxon>Microcebus</taxon>
    </lineage>
</organism>
<evidence type="ECO:0000250" key="1"/>
<evidence type="ECO:0000250" key="2">
    <source>
        <dbReference type="UniProtKB" id="P00157"/>
    </source>
</evidence>
<evidence type="ECO:0000255" key="3">
    <source>
        <dbReference type="PROSITE-ProRule" id="PRU00967"/>
    </source>
</evidence>
<evidence type="ECO:0000255" key="4">
    <source>
        <dbReference type="PROSITE-ProRule" id="PRU00968"/>
    </source>
</evidence>
<accession>Q9G156</accession>
<protein>
    <recommendedName>
        <fullName>Cytochrome b</fullName>
    </recommendedName>
    <alternativeName>
        <fullName>Complex III subunit 3</fullName>
    </alternativeName>
    <alternativeName>
        <fullName>Complex III subunit III</fullName>
    </alternativeName>
    <alternativeName>
        <fullName>Cytochrome b-c1 complex subunit 3</fullName>
    </alternativeName>
    <alternativeName>
        <fullName>Ubiquinol-cytochrome-c reductase complex cytochrome b subunit</fullName>
    </alternativeName>
</protein>
<keyword id="KW-0249">Electron transport</keyword>
<keyword id="KW-0349">Heme</keyword>
<keyword id="KW-0408">Iron</keyword>
<keyword id="KW-0472">Membrane</keyword>
<keyword id="KW-0479">Metal-binding</keyword>
<keyword id="KW-0496">Mitochondrion</keyword>
<keyword id="KW-0999">Mitochondrion inner membrane</keyword>
<keyword id="KW-0679">Respiratory chain</keyword>
<keyword id="KW-0812">Transmembrane</keyword>
<keyword id="KW-1133">Transmembrane helix</keyword>
<keyword id="KW-0813">Transport</keyword>
<keyword id="KW-0830">Ubiquinone</keyword>
<dbReference type="EMBL" id="AF285554">
    <property type="protein sequence ID" value="AAG30699.1"/>
    <property type="molecule type" value="Genomic_DNA"/>
</dbReference>
<dbReference type="EMBL" id="AF285555">
    <property type="protein sequence ID" value="AAG30700.1"/>
    <property type="molecule type" value="Genomic_DNA"/>
</dbReference>
<dbReference type="EMBL" id="AF285556">
    <property type="protein sequence ID" value="AAG30701.1"/>
    <property type="molecule type" value="Genomic_DNA"/>
</dbReference>
<dbReference type="SMR" id="Q9G156"/>
<dbReference type="GO" id="GO:0005743">
    <property type="term" value="C:mitochondrial inner membrane"/>
    <property type="evidence" value="ECO:0007669"/>
    <property type="project" value="UniProtKB-SubCell"/>
</dbReference>
<dbReference type="GO" id="GO:0045275">
    <property type="term" value="C:respiratory chain complex III"/>
    <property type="evidence" value="ECO:0007669"/>
    <property type="project" value="InterPro"/>
</dbReference>
<dbReference type="GO" id="GO:0046872">
    <property type="term" value="F:metal ion binding"/>
    <property type="evidence" value="ECO:0007669"/>
    <property type="project" value="UniProtKB-KW"/>
</dbReference>
<dbReference type="GO" id="GO:0008121">
    <property type="term" value="F:ubiquinol-cytochrome-c reductase activity"/>
    <property type="evidence" value="ECO:0007669"/>
    <property type="project" value="InterPro"/>
</dbReference>
<dbReference type="GO" id="GO:0006122">
    <property type="term" value="P:mitochondrial electron transport, ubiquinol to cytochrome c"/>
    <property type="evidence" value="ECO:0007669"/>
    <property type="project" value="TreeGrafter"/>
</dbReference>
<dbReference type="CDD" id="cd00290">
    <property type="entry name" value="cytochrome_b_C"/>
    <property type="match status" value="1"/>
</dbReference>
<dbReference type="CDD" id="cd00284">
    <property type="entry name" value="Cytochrome_b_N"/>
    <property type="match status" value="1"/>
</dbReference>
<dbReference type="FunFam" id="1.20.810.10:FF:000002">
    <property type="entry name" value="Cytochrome b"/>
    <property type="match status" value="1"/>
</dbReference>
<dbReference type="Gene3D" id="1.20.810.10">
    <property type="entry name" value="Cytochrome Bc1 Complex, Chain C"/>
    <property type="match status" value="1"/>
</dbReference>
<dbReference type="InterPro" id="IPR005798">
    <property type="entry name" value="Cyt_b/b6_C"/>
</dbReference>
<dbReference type="InterPro" id="IPR036150">
    <property type="entry name" value="Cyt_b/b6_C_sf"/>
</dbReference>
<dbReference type="InterPro" id="IPR005797">
    <property type="entry name" value="Cyt_b/b6_N"/>
</dbReference>
<dbReference type="InterPro" id="IPR027387">
    <property type="entry name" value="Cytb/b6-like_sf"/>
</dbReference>
<dbReference type="InterPro" id="IPR030689">
    <property type="entry name" value="Cytochrome_b"/>
</dbReference>
<dbReference type="InterPro" id="IPR048260">
    <property type="entry name" value="Cytochrome_b_C_euk/bac"/>
</dbReference>
<dbReference type="InterPro" id="IPR048259">
    <property type="entry name" value="Cytochrome_b_N_euk/bac"/>
</dbReference>
<dbReference type="InterPro" id="IPR016174">
    <property type="entry name" value="Di-haem_cyt_TM"/>
</dbReference>
<dbReference type="PANTHER" id="PTHR19271">
    <property type="entry name" value="CYTOCHROME B"/>
    <property type="match status" value="1"/>
</dbReference>
<dbReference type="PANTHER" id="PTHR19271:SF16">
    <property type="entry name" value="CYTOCHROME B"/>
    <property type="match status" value="1"/>
</dbReference>
<dbReference type="Pfam" id="PF00032">
    <property type="entry name" value="Cytochrom_B_C"/>
    <property type="match status" value="1"/>
</dbReference>
<dbReference type="Pfam" id="PF00033">
    <property type="entry name" value="Cytochrome_B"/>
    <property type="match status" value="1"/>
</dbReference>
<dbReference type="PIRSF" id="PIRSF038885">
    <property type="entry name" value="COB"/>
    <property type="match status" value="1"/>
</dbReference>
<dbReference type="SUPFAM" id="SSF81648">
    <property type="entry name" value="a domain/subunit of cytochrome bc1 complex (Ubiquinol-cytochrome c reductase)"/>
    <property type="match status" value="1"/>
</dbReference>
<dbReference type="SUPFAM" id="SSF81342">
    <property type="entry name" value="Transmembrane di-heme cytochromes"/>
    <property type="match status" value="1"/>
</dbReference>
<dbReference type="PROSITE" id="PS51003">
    <property type="entry name" value="CYTB_CTER"/>
    <property type="match status" value="1"/>
</dbReference>
<dbReference type="PROSITE" id="PS51002">
    <property type="entry name" value="CYTB_NTER"/>
    <property type="match status" value="1"/>
</dbReference>
<sequence length="379" mass="42678">MTNIRKTHPLMKIMNSSFIDLPAPSNISSWWNFGSLLGACLAIQIITGLFLAMHYTADTATAFSSVTHICRDVNQGWIIRYLHANGASMFFLCLFLHVGRGVYYGSFTLYETWNIGIILLFTVMATAFMGYVLPWGQMSFWGATVITNLLSAIPYIGTDLVEWIWGGFSVDKATLTRFFAFHFILPFIISALVLVHLLFLHETGSNNPLGTSSESDKIPFHPYYTIKDLLGLMFLLLTLTILVLFSPDLLGDPDNYMPANPLSTPPHIKPEWYFLFAYAILRSIPNKLGGVLALIMSILILAIIPVLQTAKQRTMMFRPLSQIMFWILTADLFTLTWIGGQPVEHPFVTIGQVASILYFSLILIIMPTVSLIENKMLKW</sequence>
<geneLocation type="mitochondrion"/>